<name>PGK_ALISL</name>
<feature type="chain" id="PRO_1000096319" description="Phosphoglycerate kinase">
    <location>
        <begin position="1"/>
        <end position="387"/>
    </location>
</feature>
<feature type="binding site" evidence="1">
    <location>
        <begin position="21"/>
        <end position="23"/>
    </location>
    <ligand>
        <name>substrate</name>
    </ligand>
</feature>
<feature type="binding site" evidence="1">
    <location>
        <position position="36"/>
    </location>
    <ligand>
        <name>substrate</name>
    </ligand>
</feature>
<feature type="binding site" evidence="1">
    <location>
        <begin position="59"/>
        <end position="62"/>
    </location>
    <ligand>
        <name>substrate</name>
    </ligand>
</feature>
<feature type="binding site" evidence="1">
    <location>
        <position position="113"/>
    </location>
    <ligand>
        <name>substrate</name>
    </ligand>
</feature>
<feature type="binding site" evidence="1">
    <location>
        <position position="146"/>
    </location>
    <ligand>
        <name>substrate</name>
    </ligand>
</feature>
<feature type="binding site" evidence="1">
    <location>
        <position position="197"/>
    </location>
    <ligand>
        <name>ATP</name>
        <dbReference type="ChEBI" id="CHEBI:30616"/>
    </ligand>
</feature>
<feature type="binding site" evidence="1">
    <location>
        <position position="314"/>
    </location>
    <ligand>
        <name>ATP</name>
        <dbReference type="ChEBI" id="CHEBI:30616"/>
    </ligand>
</feature>
<feature type="binding site" evidence="1">
    <location>
        <begin position="340"/>
        <end position="343"/>
    </location>
    <ligand>
        <name>ATP</name>
        <dbReference type="ChEBI" id="CHEBI:30616"/>
    </ligand>
</feature>
<gene>
    <name evidence="1" type="primary">pgk</name>
    <name type="ordered locus">VSAL_I0556</name>
</gene>
<organism>
    <name type="scientific">Aliivibrio salmonicida (strain LFI1238)</name>
    <name type="common">Vibrio salmonicida (strain LFI1238)</name>
    <dbReference type="NCBI Taxonomy" id="316275"/>
    <lineage>
        <taxon>Bacteria</taxon>
        <taxon>Pseudomonadati</taxon>
        <taxon>Pseudomonadota</taxon>
        <taxon>Gammaproteobacteria</taxon>
        <taxon>Vibrionales</taxon>
        <taxon>Vibrionaceae</taxon>
        <taxon>Aliivibrio</taxon>
    </lineage>
</organism>
<evidence type="ECO:0000255" key="1">
    <source>
        <dbReference type="HAMAP-Rule" id="MF_00145"/>
    </source>
</evidence>
<protein>
    <recommendedName>
        <fullName evidence="1">Phosphoglycerate kinase</fullName>
        <ecNumber evidence="1">2.7.2.3</ecNumber>
    </recommendedName>
</protein>
<reference key="1">
    <citation type="journal article" date="2008" name="BMC Genomics">
        <title>The genome sequence of the fish pathogen Aliivibrio salmonicida strain LFI1238 shows extensive evidence of gene decay.</title>
        <authorList>
            <person name="Hjerde E."/>
            <person name="Lorentzen M.S."/>
            <person name="Holden M.T."/>
            <person name="Seeger K."/>
            <person name="Paulsen S."/>
            <person name="Bason N."/>
            <person name="Churcher C."/>
            <person name="Harris D."/>
            <person name="Norbertczak H."/>
            <person name="Quail M.A."/>
            <person name="Sanders S."/>
            <person name="Thurston S."/>
            <person name="Parkhill J."/>
            <person name="Willassen N.P."/>
            <person name="Thomson N.R."/>
        </authorList>
    </citation>
    <scope>NUCLEOTIDE SEQUENCE [LARGE SCALE GENOMIC DNA]</scope>
    <source>
        <strain>LFI1238</strain>
    </source>
</reference>
<keyword id="KW-0067">ATP-binding</keyword>
<keyword id="KW-0963">Cytoplasm</keyword>
<keyword id="KW-0324">Glycolysis</keyword>
<keyword id="KW-0418">Kinase</keyword>
<keyword id="KW-0547">Nucleotide-binding</keyword>
<keyword id="KW-0808">Transferase</keyword>
<comment type="catalytic activity">
    <reaction evidence="1">
        <text>(2R)-3-phosphoglycerate + ATP = (2R)-3-phospho-glyceroyl phosphate + ADP</text>
        <dbReference type="Rhea" id="RHEA:14801"/>
        <dbReference type="ChEBI" id="CHEBI:30616"/>
        <dbReference type="ChEBI" id="CHEBI:57604"/>
        <dbReference type="ChEBI" id="CHEBI:58272"/>
        <dbReference type="ChEBI" id="CHEBI:456216"/>
        <dbReference type="EC" id="2.7.2.3"/>
    </reaction>
</comment>
<comment type="pathway">
    <text evidence="1">Carbohydrate degradation; glycolysis; pyruvate from D-glyceraldehyde 3-phosphate: step 2/5.</text>
</comment>
<comment type="subunit">
    <text evidence="1">Monomer.</text>
</comment>
<comment type="subcellular location">
    <subcellularLocation>
        <location evidence="1">Cytoplasm</location>
    </subcellularLocation>
</comment>
<comment type="similarity">
    <text evidence="1">Belongs to the phosphoglycerate kinase family.</text>
</comment>
<accession>B6EMW2</accession>
<dbReference type="EC" id="2.7.2.3" evidence="1"/>
<dbReference type="EMBL" id="FM178379">
    <property type="protein sequence ID" value="CAQ78241.1"/>
    <property type="molecule type" value="Genomic_DNA"/>
</dbReference>
<dbReference type="RefSeq" id="WP_012549365.1">
    <property type="nucleotide sequence ID" value="NC_011312.1"/>
</dbReference>
<dbReference type="SMR" id="B6EMW2"/>
<dbReference type="KEGG" id="vsa:VSAL_I0556"/>
<dbReference type="eggNOG" id="COG0126">
    <property type="taxonomic scope" value="Bacteria"/>
</dbReference>
<dbReference type="HOGENOM" id="CLU_025427_0_2_6"/>
<dbReference type="UniPathway" id="UPA00109">
    <property type="reaction ID" value="UER00185"/>
</dbReference>
<dbReference type="Proteomes" id="UP000001730">
    <property type="component" value="Chromosome 1"/>
</dbReference>
<dbReference type="GO" id="GO:0005829">
    <property type="term" value="C:cytosol"/>
    <property type="evidence" value="ECO:0007669"/>
    <property type="project" value="TreeGrafter"/>
</dbReference>
<dbReference type="GO" id="GO:0043531">
    <property type="term" value="F:ADP binding"/>
    <property type="evidence" value="ECO:0007669"/>
    <property type="project" value="TreeGrafter"/>
</dbReference>
<dbReference type="GO" id="GO:0005524">
    <property type="term" value="F:ATP binding"/>
    <property type="evidence" value="ECO:0007669"/>
    <property type="project" value="UniProtKB-KW"/>
</dbReference>
<dbReference type="GO" id="GO:0004618">
    <property type="term" value="F:phosphoglycerate kinase activity"/>
    <property type="evidence" value="ECO:0007669"/>
    <property type="project" value="UniProtKB-UniRule"/>
</dbReference>
<dbReference type="GO" id="GO:0006094">
    <property type="term" value="P:gluconeogenesis"/>
    <property type="evidence" value="ECO:0007669"/>
    <property type="project" value="TreeGrafter"/>
</dbReference>
<dbReference type="GO" id="GO:0006096">
    <property type="term" value="P:glycolytic process"/>
    <property type="evidence" value="ECO:0007669"/>
    <property type="project" value="UniProtKB-UniRule"/>
</dbReference>
<dbReference type="FunFam" id="3.40.50.1260:FF:000001">
    <property type="entry name" value="Phosphoglycerate kinase"/>
    <property type="match status" value="1"/>
</dbReference>
<dbReference type="FunFam" id="3.40.50.1260:FF:000002">
    <property type="entry name" value="Phosphoglycerate kinase"/>
    <property type="match status" value="1"/>
</dbReference>
<dbReference type="Gene3D" id="3.40.50.1260">
    <property type="entry name" value="Phosphoglycerate kinase, N-terminal domain"/>
    <property type="match status" value="2"/>
</dbReference>
<dbReference type="HAMAP" id="MF_00145">
    <property type="entry name" value="Phosphoglyc_kinase"/>
    <property type="match status" value="1"/>
</dbReference>
<dbReference type="InterPro" id="IPR001576">
    <property type="entry name" value="Phosphoglycerate_kinase"/>
</dbReference>
<dbReference type="InterPro" id="IPR015911">
    <property type="entry name" value="Phosphoglycerate_kinase_CS"/>
</dbReference>
<dbReference type="InterPro" id="IPR015824">
    <property type="entry name" value="Phosphoglycerate_kinase_N"/>
</dbReference>
<dbReference type="InterPro" id="IPR036043">
    <property type="entry name" value="Phosphoglycerate_kinase_sf"/>
</dbReference>
<dbReference type="PANTHER" id="PTHR11406">
    <property type="entry name" value="PHOSPHOGLYCERATE KINASE"/>
    <property type="match status" value="1"/>
</dbReference>
<dbReference type="PANTHER" id="PTHR11406:SF23">
    <property type="entry name" value="PHOSPHOGLYCERATE KINASE 1, CHLOROPLASTIC-RELATED"/>
    <property type="match status" value="1"/>
</dbReference>
<dbReference type="Pfam" id="PF00162">
    <property type="entry name" value="PGK"/>
    <property type="match status" value="1"/>
</dbReference>
<dbReference type="PIRSF" id="PIRSF000724">
    <property type="entry name" value="Pgk"/>
    <property type="match status" value="1"/>
</dbReference>
<dbReference type="PRINTS" id="PR00477">
    <property type="entry name" value="PHGLYCKINASE"/>
</dbReference>
<dbReference type="SUPFAM" id="SSF53748">
    <property type="entry name" value="Phosphoglycerate kinase"/>
    <property type="match status" value="1"/>
</dbReference>
<dbReference type="PROSITE" id="PS00111">
    <property type="entry name" value="PGLYCERATE_KINASE"/>
    <property type="match status" value="1"/>
</dbReference>
<proteinExistence type="inferred from homology"/>
<sequence length="387" mass="40626">MSVIKMTDLELAGKRVFIRADLNVPVKDGKVTSDARILASLPTIKLCLEAGAKVMVTSHLGRPTEGEYNEEFSLAPVVNYLNDALDCDVKLAKDYLDGLELNAGELVVLENVRFNKGEKKNEEALSKKYAALCDIFVMDAFGTAHRAQASTHGVGMNAPIACAGPLLAAELEALGKAMDNPARPLVAIVGGSKVSTKLTVLESLSKIADQLVVGGGIANTFIAAQGHNVGKSLYEADLVETAKKLMVECAIPVATDVACAKAFDENAEAEIKNVADVQDDDMIFDLGPDSTAVLADIIKNAKTILWNGPVGVFEFKNFEAGTAGISKAIADSEGFSVAGGGDTLAAIDKFGIKADVSYISTGGGAFLEFVEGKVLPAVAMLEERAKA</sequence>